<organism>
    <name type="scientific">Faxonius limosus</name>
    <name type="common">Spinycheek crayfish</name>
    <name type="synonym">Orconectes limosus</name>
    <dbReference type="NCBI Taxonomy" id="28379"/>
    <lineage>
        <taxon>Eukaryota</taxon>
        <taxon>Metazoa</taxon>
        <taxon>Ecdysozoa</taxon>
        <taxon>Arthropoda</taxon>
        <taxon>Crustacea</taxon>
        <taxon>Multicrustacea</taxon>
        <taxon>Malacostraca</taxon>
        <taxon>Eumalacostraca</taxon>
        <taxon>Eucarida</taxon>
        <taxon>Decapoda</taxon>
        <taxon>Pleocyemata</taxon>
        <taxon>Astacidea</taxon>
        <taxon>Astacoidea</taxon>
        <taxon>Cambaridae</taxon>
        <taxon>Faxonius</taxon>
    </lineage>
</organism>
<name>ORMY_FAXLI</name>
<keyword id="KW-0027">Amidation</keyword>
<keyword id="KW-0903">Direct protein sequencing</keyword>
<keyword id="KW-0527">Neuropeptide</keyword>
<keyword id="KW-0964">Secreted</keyword>
<protein>
    <recommendedName>
        <fullName>Orcomyotropin</fullName>
        <shortName>OMT</shortName>
    </recommendedName>
</protein>
<comment type="function">
    <text>Myotropic peptide, enhances both the frequency and amplitude of spontaneous hindgut contractions. It is synthesized by abdominal ganglionic neurons.</text>
</comment>
<comment type="subcellular location">
    <subcellularLocation>
        <location>Secreted</location>
    </subcellularLocation>
</comment>
<comment type="mass spectrometry" mass="904.8" method="FAB" evidence="1"/>
<proteinExistence type="evidence at protein level"/>
<dbReference type="GO" id="GO:0005576">
    <property type="term" value="C:extracellular region"/>
    <property type="evidence" value="ECO:0007669"/>
    <property type="project" value="UniProtKB-SubCell"/>
</dbReference>
<dbReference type="GO" id="GO:0007218">
    <property type="term" value="P:neuropeptide signaling pathway"/>
    <property type="evidence" value="ECO:0007669"/>
    <property type="project" value="UniProtKB-KW"/>
</dbReference>
<accession>P82455</accession>
<evidence type="ECO:0000269" key="1">
    <source>
    </source>
</evidence>
<sequence length="8" mass="905">FDAFTTGF</sequence>
<feature type="peptide" id="PRO_0000044182" description="Orcomyotropin">
    <location>
        <begin position="1"/>
        <end position="8"/>
    </location>
</feature>
<feature type="modified residue" description="Phenylalanine amide" evidence="1">
    <location>
        <position position="8"/>
    </location>
</feature>
<reference key="1">
    <citation type="journal article" date="2000" name="J. Exp. Biol.">
        <title>Two orcokinins and the novel octapeptide orcomyotropin in the hindgut of the crayfish Orconectes limosus: identified myostimulatory neuropeptides originating together in neurones of the terminal abdominal ganglion.</title>
        <authorList>
            <person name="Dircksen H."/>
            <person name="Burdzik S."/>
            <person name="Sauter A."/>
            <person name="Keller R."/>
        </authorList>
    </citation>
    <scope>PROTEIN SEQUENCE</scope>
    <scope>MASS SPECTROMETRY</scope>
    <scope>AMIDATION AT PHE-8</scope>
    <source>
        <tissue>Hindgut</tissue>
    </source>
</reference>